<organism>
    <name type="scientific">Vibrio cholerae serotype O1 (strain ATCC 39315 / El Tor Inaba N16961)</name>
    <dbReference type="NCBI Taxonomy" id="243277"/>
    <lineage>
        <taxon>Bacteria</taxon>
        <taxon>Pseudomonadati</taxon>
        <taxon>Pseudomonadota</taxon>
        <taxon>Gammaproteobacteria</taxon>
        <taxon>Vibrionales</taxon>
        <taxon>Vibrionaceae</taxon>
        <taxon>Vibrio</taxon>
    </lineage>
</organism>
<feature type="chain" id="PRO_0000286789" description="2-aminoethylphosphonate--pyruvate transaminase">
    <location>
        <begin position="1"/>
        <end position="367"/>
    </location>
</feature>
<feature type="modified residue" description="N6-(pyridoxal phosphate)lysine" evidence="1">
    <location>
        <position position="193"/>
    </location>
</feature>
<reference key="1">
    <citation type="journal article" date="2000" name="Nature">
        <title>DNA sequence of both chromosomes of the cholera pathogen Vibrio cholerae.</title>
        <authorList>
            <person name="Heidelberg J.F."/>
            <person name="Eisen J.A."/>
            <person name="Nelson W.C."/>
            <person name="Clayton R.A."/>
            <person name="Gwinn M.L."/>
            <person name="Dodson R.J."/>
            <person name="Haft D.H."/>
            <person name="Hickey E.K."/>
            <person name="Peterson J.D."/>
            <person name="Umayam L.A."/>
            <person name="Gill S.R."/>
            <person name="Nelson K.E."/>
            <person name="Read T.D."/>
            <person name="Tettelin H."/>
            <person name="Richardson D.L."/>
            <person name="Ermolaeva M.D."/>
            <person name="Vamathevan J.J."/>
            <person name="Bass S."/>
            <person name="Qin H."/>
            <person name="Dragoi I."/>
            <person name="Sellers P."/>
            <person name="McDonald L.A."/>
            <person name="Utterback T.R."/>
            <person name="Fleischmann R.D."/>
            <person name="Nierman W.C."/>
            <person name="White O."/>
            <person name="Salzberg S.L."/>
            <person name="Smith H.O."/>
            <person name="Colwell R.R."/>
            <person name="Mekalanos J.J."/>
            <person name="Venter J.C."/>
            <person name="Fraser C.M."/>
        </authorList>
    </citation>
    <scope>NUCLEOTIDE SEQUENCE [LARGE SCALE GENOMIC DNA]</scope>
    <source>
        <strain>ATCC 39315 / El Tor Inaba N16961</strain>
    </source>
</reference>
<name>PHNW_VIBCH</name>
<comment type="function">
    <text evidence="1">Involved in phosphonate degradation.</text>
</comment>
<comment type="catalytic activity">
    <reaction evidence="1">
        <text>(2-aminoethyl)phosphonate + pyruvate = phosphonoacetaldehyde + L-alanine</text>
        <dbReference type="Rhea" id="RHEA:17021"/>
        <dbReference type="ChEBI" id="CHEBI:15361"/>
        <dbReference type="ChEBI" id="CHEBI:57418"/>
        <dbReference type="ChEBI" id="CHEBI:57972"/>
        <dbReference type="ChEBI" id="CHEBI:58383"/>
        <dbReference type="EC" id="2.6.1.37"/>
    </reaction>
</comment>
<comment type="cofactor">
    <cofactor evidence="1">
        <name>pyridoxal 5'-phosphate</name>
        <dbReference type="ChEBI" id="CHEBI:597326"/>
    </cofactor>
</comment>
<comment type="subunit">
    <text evidence="1">Homodimer.</text>
</comment>
<comment type="similarity">
    <text evidence="1">Belongs to the class-V pyridoxal-phosphate-dependent aminotransferase family. PhnW subfamily.</text>
</comment>
<sequence>MKNAYLLLTPGPLSTSESVREAMLKDWCTWDDDYNLEIVEVIRRKLVTLATTQSGYTSVLMQGSGTASVEATIGSVMLPTDKLLVIDNGAYGARIAQIAQYLNIACRVIAPGETAQPNLDEIADVLTHDPAITHVAIVHCETTTGMLNPIAEVAKIAKQHGKRVILDAMSSFGGIPMDIGALGIDFMISSANKCIQGVPGFGFVIAKRSELEQCQGRARSLTLDLFDQWQCMEKNHGKWRFTSPTHTVRAFYQALLELESEGGIAARYQRYQTNQTQLVKGMRELGFAPLLPEKLHSPIITSFYSPEHSDYQFAEFYQRLKQQGFVIYPGKVSHADCFRIGNIGEVYPQDIERLLSAMQHAIYWQQA</sequence>
<accession>Q9KLY7</accession>
<proteinExistence type="inferred from homology"/>
<evidence type="ECO:0000255" key="1">
    <source>
        <dbReference type="HAMAP-Rule" id="MF_01376"/>
    </source>
</evidence>
<dbReference type="EC" id="2.6.1.37" evidence="1"/>
<dbReference type="EMBL" id="AE003853">
    <property type="protein sequence ID" value="AAF96505.1"/>
    <property type="molecule type" value="Genomic_DNA"/>
</dbReference>
<dbReference type="PIR" id="H82437">
    <property type="entry name" value="H82437"/>
</dbReference>
<dbReference type="RefSeq" id="NP_232993.1">
    <property type="nucleotide sequence ID" value="NC_002506.1"/>
</dbReference>
<dbReference type="RefSeq" id="WP_000786490.1">
    <property type="nucleotide sequence ID" value="NZ_LT906615.1"/>
</dbReference>
<dbReference type="SMR" id="Q9KLY7"/>
<dbReference type="STRING" id="243277.VC_A0604"/>
<dbReference type="DNASU" id="2612724"/>
<dbReference type="EnsemblBacteria" id="AAF96505">
    <property type="protein sequence ID" value="AAF96505"/>
    <property type="gene ID" value="VC_A0604"/>
</dbReference>
<dbReference type="KEGG" id="vch:VC_A0604"/>
<dbReference type="PATRIC" id="fig|243277.26.peg.3231"/>
<dbReference type="eggNOG" id="COG0075">
    <property type="taxonomic scope" value="Bacteria"/>
</dbReference>
<dbReference type="HOGENOM" id="CLU_027686_3_1_6"/>
<dbReference type="Proteomes" id="UP000000584">
    <property type="component" value="Chromosome 2"/>
</dbReference>
<dbReference type="GO" id="GO:0047304">
    <property type="term" value="F:2-aminoethylphosphonate-pyruvate transaminase activity"/>
    <property type="evidence" value="ECO:0007669"/>
    <property type="project" value="UniProtKB-UniRule"/>
</dbReference>
<dbReference type="GO" id="GO:0019700">
    <property type="term" value="P:organic phosphonate catabolic process"/>
    <property type="evidence" value="ECO:0007669"/>
    <property type="project" value="InterPro"/>
</dbReference>
<dbReference type="FunFam" id="3.40.640.10:FF:000183">
    <property type="entry name" value="2-aminoethylphosphonate--pyruvate transaminase"/>
    <property type="match status" value="1"/>
</dbReference>
<dbReference type="Gene3D" id="3.90.1150.10">
    <property type="entry name" value="Aspartate Aminotransferase, domain 1"/>
    <property type="match status" value="1"/>
</dbReference>
<dbReference type="Gene3D" id="3.40.640.10">
    <property type="entry name" value="Type I PLP-dependent aspartate aminotransferase-like (Major domain)"/>
    <property type="match status" value="1"/>
</dbReference>
<dbReference type="HAMAP" id="MF_01376">
    <property type="entry name" value="PhnW_aminotrans_5"/>
    <property type="match status" value="1"/>
</dbReference>
<dbReference type="InterPro" id="IPR000192">
    <property type="entry name" value="Aminotrans_V_dom"/>
</dbReference>
<dbReference type="InterPro" id="IPR012703">
    <property type="entry name" value="NH2EtPonate_pyrv_transaminase"/>
</dbReference>
<dbReference type="InterPro" id="IPR015424">
    <property type="entry name" value="PyrdxlP-dep_Trfase"/>
</dbReference>
<dbReference type="InterPro" id="IPR015421">
    <property type="entry name" value="PyrdxlP-dep_Trfase_major"/>
</dbReference>
<dbReference type="InterPro" id="IPR015422">
    <property type="entry name" value="PyrdxlP-dep_Trfase_small"/>
</dbReference>
<dbReference type="InterPro" id="IPR024169">
    <property type="entry name" value="SP_NH2Trfase/AEP_transaminase"/>
</dbReference>
<dbReference type="NCBIfam" id="TIGR03301">
    <property type="entry name" value="PhnW-AepZ"/>
    <property type="match status" value="1"/>
</dbReference>
<dbReference type="NCBIfam" id="NF010006">
    <property type="entry name" value="PRK13479.1"/>
    <property type="match status" value="1"/>
</dbReference>
<dbReference type="NCBIfam" id="TIGR02326">
    <property type="entry name" value="transamin_PhnW"/>
    <property type="match status" value="1"/>
</dbReference>
<dbReference type="PANTHER" id="PTHR42778">
    <property type="entry name" value="2-AMINOETHYLPHOSPHONATE--PYRUVATE TRANSAMINASE"/>
    <property type="match status" value="1"/>
</dbReference>
<dbReference type="PANTHER" id="PTHR42778:SF1">
    <property type="entry name" value="2-AMINOETHYLPHOSPHONATE--PYRUVATE TRANSAMINASE"/>
    <property type="match status" value="1"/>
</dbReference>
<dbReference type="Pfam" id="PF00266">
    <property type="entry name" value="Aminotran_5"/>
    <property type="match status" value="1"/>
</dbReference>
<dbReference type="PIRSF" id="PIRSF000524">
    <property type="entry name" value="SPT"/>
    <property type="match status" value="1"/>
</dbReference>
<dbReference type="SUPFAM" id="SSF53383">
    <property type="entry name" value="PLP-dependent transferases"/>
    <property type="match status" value="1"/>
</dbReference>
<protein>
    <recommendedName>
        <fullName evidence="1">2-aminoethylphosphonate--pyruvate transaminase</fullName>
        <ecNumber evidence="1">2.6.1.37</ecNumber>
    </recommendedName>
    <alternativeName>
        <fullName evidence="1">2-aminoethylphosphonate aminotransferase</fullName>
    </alternativeName>
    <alternativeName>
        <fullName evidence="1">AEP transaminase</fullName>
        <shortName evidence="1">AEPT</shortName>
    </alternativeName>
</protein>
<keyword id="KW-0032">Aminotransferase</keyword>
<keyword id="KW-0663">Pyridoxal phosphate</keyword>
<keyword id="KW-0670">Pyruvate</keyword>
<keyword id="KW-1185">Reference proteome</keyword>
<keyword id="KW-0808">Transferase</keyword>
<gene>
    <name evidence="1" type="primary">phnW</name>
    <name type="ordered locus">VC_A0604</name>
</gene>